<protein>
    <recommendedName>
        <fullName>Phospholipase A-2-activating protein</fullName>
        <shortName>PLA2P</shortName>
        <shortName>PLAP</shortName>
    </recommendedName>
</protein>
<organism>
    <name type="scientific">Xenopus laevis</name>
    <name type="common">African clawed frog</name>
    <dbReference type="NCBI Taxonomy" id="8355"/>
    <lineage>
        <taxon>Eukaryota</taxon>
        <taxon>Metazoa</taxon>
        <taxon>Chordata</taxon>
        <taxon>Craniata</taxon>
        <taxon>Vertebrata</taxon>
        <taxon>Euteleostomi</taxon>
        <taxon>Amphibia</taxon>
        <taxon>Batrachia</taxon>
        <taxon>Anura</taxon>
        <taxon>Pipoidea</taxon>
        <taxon>Pipidae</taxon>
        <taxon>Xenopodinae</taxon>
        <taxon>Xenopus</taxon>
        <taxon>Xenopus</taxon>
    </lineage>
</organism>
<proteinExistence type="evidence at transcript level"/>
<gene>
    <name type="primary">plaa</name>
</gene>
<dbReference type="EMBL" id="BC074216">
    <property type="protein sequence ID" value="AAH74216.1"/>
    <property type="status" value="ALT_INIT"/>
    <property type="molecule type" value="mRNA"/>
</dbReference>
<dbReference type="EMBL" id="BC098975">
    <property type="protein sequence ID" value="AAH98975.1"/>
    <property type="status" value="ALT_INIT"/>
    <property type="molecule type" value="mRNA"/>
</dbReference>
<dbReference type="EMBL" id="BC108854">
    <property type="protein sequence ID" value="AAI08855.1"/>
    <property type="status" value="ALT_INIT"/>
    <property type="molecule type" value="mRNA"/>
</dbReference>
<dbReference type="SMR" id="Q6GM65"/>
<dbReference type="GeneID" id="443698"/>
<dbReference type="KEGG" id="xla:443698"/>
<dbReference type="AGR" id="Xenbase:XB-GENE-17340768"/>
<dbReference type="CTD" id="443698"/>
<dbReference type="Xenbase" id="XB-GENE-17340768">
    <property type="gene designation" value="plaa.S"/>
</dbReference>
<dbReference type="OMA" id="DKCIYYW"/>
<dbReference type="OrthoDB" id="10265988at2759"/>
<dbReference type="Proteomes" id="UP000186698">
    <property type="component" value="Chromosome 1S"/>
</dbReference>
<dbReference type="Bgee" id="443698">
    <property type="expression patterns" value="Expressed in muscle tissue and 20 other cell types or tissues"/>
</dbReference>
<dbReference type="GO" id="GO:0005737">
    <property type="term" value="C:cytoplasm"/>
    <property type="evidence" value="ECO:0000250"/>
    <property type="project" value="UniProtKB"/>
</dbReference>
<dbReference type="GO" id="GO:0005634">
    <property type="term" value="C:nucleus"/>
    <property type="evidence" value="ECO:0000250"/>
    <property type="project" value="UniProtKB"/>
</dbReference>
<dbReference type="GO" id="GO:0045202">
    <property type="term" value="C:synapse"/>
    <property type="evidence" value="ECO:0000250"/>
    <property type="project" value="UniProtKB"/>
</dbReference>
<dbReference type="GO" id="GO:0016005">
    <property type="term" value="F:phospholipase A2 activator activity"/>
    <property type="evidence" value="ECO:0000250"/>
    <property type="project" value="UniProtKB"/>
</dbReference>
<dbReference type="GO" id="GO:0043130">
    <property type="term" value="F:ubiquitin binding"/>
    <property type="evidence" value="ECO:0000318"/>
    <property type="project" value="GO_Central"/>
</dbReference>
<dbReference type="GO" id="GO:0071222">
    <property type="term" value="P:cellular response to lipopolysaccharide"/>
    <property type="evidence" value="ECO:0000250"/>
    <property type="project" value="UniProtKB"/>
</dbReference>
<dbReference type="GO" id="GO:0016236">
    <property type="term" value="P:macroautophagy"/>
    <property type="evidence" value="ECO:0000250"/>
    <property type="project" value="UniProtKB"/>
</dbReference>
<dbReference type="GO" id="GO:1900045">
    <property type="term" value="P:negative regulation of protein K63-linked ubiquitination"/>
    <property type="evidence" value="ECO:0000250"/>
    <property type="project" value="UniProtKB"/>
</dbReference>
<dbReference type="GO" id="GO:0007399">
    <property type="term" value="P:nervous system development"/>
    <property type="evidence" value="ECO:0007669"/>
    <property type="project" value="UniProtKB-KW"/>
</dbReference>
<dbReference type="GO" id="GO:1903861">
    <property type="term" value="P:positive regulation of dendrite extension"/>
    <property type="evidence" value="ECO:0000250"/>
    <property type="project" value="UniProtKB"/>
</dbReference>
<dbReference type="GO" id="GO:2001224">
    <property type="term" value="P:positive regulation of neuron migration"/>
    <property type="evidence" value="ECO:0000250"/>
    <property type="project" value="UniProtKB"/>
</dbReference>
<dbReference type="GO" id="GO:0031394">
    <property type="term" value="P:positive regulation of prostaglandin biosynthetic process"/>
    <property type="evidence" value="ECO:0000250"/>
    <property type="project" value="UniProtKB"/>
</dbReference>
<dbReference type="GO" id="GO:1903423">
    <property type="term" value="P:positive regulation of synaptic vesicle recycling"/>
    <property type="evidence" value="ECO:0000250"/>
    <property type="project" value="UniProtKB"/>
</dbReference>
<dbReference type="GO" id="GO:0043161">
    <property type="term" value="P:proteasome-mediated ubiquitin-dependent protein catabolic process"/>
    <property type="evidence" value="ECO:0000318"/>
    <property type="project" value="GO_Central"/>
</dbReference>
<dbReference type="GO" id="GO:0010992">
    <property type="term" value="P:ubiquitin recycling"/>
    <property type="evidence" value="ECO:0000318"/>
    <property type="project" value="GO_Central"/>
</dbReference>
<dbReference type="GO" id="GO:0043162">
    <property type="term" value="P:ubiquitin-dependent protein catabolic process via the multivesicular body sorting pathway"/>
    <property type="evidence" value="ECO:0000250"/>
    <property type="project" value="UniProtKB"/>
</dbReference>
<dbReference type="CDD" id="cd00200">
    <property type="entry name" value="WD40"/>
    <property type="match status" value="1"/>
</dbReference>
<dbReference type="FunFam" id="2.130.10.10:FF:000175">
    <property type="entry name" value="Phospholipase A-2-activating protein"/>
    <property type="match status" value="1"/>
</dbReference>
<dbReference type="FunFam" id="1.25.10.10:FF:000163">
    <property type="entry name" value="Phospholipase A-2-activating protein, putative"/>
    <property type="match status" value="1"/>
</dbReference>
<dbReference type="FunFam" id="3.10.20.870:FF:000001">
    <property type="entry name" value="Phospholipase A-2-activating protein-like"/>
    <property type="match status" value="1"/>
</dbReference>
<dbReference type="Gene3D" id="1.25.10.10">
    <property type="entry name" value="Leucine-rich Repeat Variant"/>
    <property type="match status" value="1"/>
</dbReference>
<dbReference type="Gene3D" id="3.10.20.870">
    <property type="entry name" value="PFU (PLAA family ubiquitin binding), C-terminal domain"/>
    <property type="match status" value="1"/>
</dbReference>
<dbReference type="Gene3D" id="2.130.10.10">
    <property type="entry name" value="YVTN repeat-like/Quinoprotein amine dehydrogenase"/>
    <property type="match status" value="1"/>
</dbReference>
<dbReference type="InterPro" id="IPR011989">
    <property type="entry name" value="ARM-like"/>
</dbReference>
<dbReference type="InterPro" id="IPR016024">
    <property type="entry name" value="ARM-type_fold"/>
</dbReference>
<dbReference type="InterPro" id="IPR015155">
    <property type="entry name" value="PFU"/>
</dbReference>
<dbReference type="InterPro" id="IPR038122">
    <property type="entry name" value="PFU_sf"/>
</dbReference>
<dbReference type="InterPro" id="IPR013535">
    <property type="entry name" value="PUL_dom"/>
</dbReference>
<dbReference type="InterPro" id="IPR015943">
    <property type="entry name" value="WD40/YVTN_repeat-like_dom_sf"/>
</dbReference>
<dbReference type="InterPro" id="IPR036322">
    <property type="entry name" value="WD40_repeat_dom_sf"/>
</dbReference>
<dbReference type="InterPro" id="IPR001680">
    <property type="entry name" value="WD40_rpt"/>
</dbReference>
<dbReference type="PANTHER" id="PTHR19849">
    <property type="entry name" value="PHOSPHOLIPASE A-2-ACTIVATING PROTEIN"/>
    <property type="match status" value="1"/>
</dbReference>
<dbReference type="PANTHER" id="PTHR19849:SF0">
    <property type="entry name" value="PHOSPHOLIPASE A-2-ACTIVATING PROTEIN"/>
    <property type="match status" value="1"/>
</dbReference>
<dbReference type="Pfam" id="PF09070">
    <property type="entry name" value="PFU"/>
    <property type="match status" value="1"/>
</dbReference>
<dbReference type="Pfam" id="PF08324">
    <property type="entry name" value="PUL"/>
    <property type="match status" value="1"/>
</dbReference>
<dbReference type="Pfam" id="PF00400">
    <property type="entry name" value="WD40"/>
    <property type="match status" value="6"/>
</dbReference>
<dbReference type="SMART" id="SM00320">
    <property type="entry name" value="WD40"/>
    <property type="match status" value="7"/>
</dbReference>
<dbReference type="SUPFAM" id="SSF48371">
    <property type="entry name" value="ARM repeat"/>
    <property type="match status" value="1"/>
</dbReference>
<dbReference type="SUPFAM" id="SSF50978">
    <property type="entry name" value="WD40 repeat-like"/>
    <property type="match status" value="1"/>
</dbReference>
<dbReference type="PROSITE" id="PS51394">
    <property type="entry name" value="PFU"/>
    <property type="match status" value="1"/>
</dbReference>
<dbReference type="PROSITE" id="PS51396">
    <property type="entry name" value="PUL"/>
    <property type="match status" value="1"/>
</dbReference>
<dbReference type="PROSITE" id="PS50082">
    <property type="entry name" value="WD_REPEATS_2"/>
    <property type="match status" value="2"/>
</dbReference>
<dbReference type="PROSITE" id="PS50294">
    <property type="entry name" value="WD_REPEATS_REGION"/>
    <property type="match status" value="1"/>
</dbReference>
<keyword id="KW-0963">Cytoplasm</keyword>
<keyword id="KW-0217">Developmental protein</keyword>
<keyword id="KW-0524">Neurogenesis</keyword>
<keyword id="KW-0539">Nucleus</keyword>
<keyword id="KW-1185">Reference proteome</keyword>
<keyword id="KW-0677">Repeat</keyword>
<keyword id="KW-0770">Synapse</keyword>
<keyword id="KW-0853">WD repeat</keyword>
<evidence type="ECO:0000250" key="1">
    <source>
        <dbReference type="UniProtKB" id="P27612"/>
    </source>
</evidence>
<evidence type="ECO:0000250" key="2">
    <source>
        <dbReference type="UniProtKB" id="Q9Y263"/>
    </source>
</evidence>
<evidence type="ECO:0000255" key="3">
    <source>
        <dbReference type="PROSITE-ProRule" id="PRU00727"/>
    </source>
</evidence>
<evidence type="ECO:0000255" key="4">
    <source>
        <dbReference type="PROSITE-ProRule" id="PRU00729"/>
    </source>
</evidence>
<evidence type="ECO:0000305" key="5"/>
<comment type="function">
    <text evidence="1 2">Plays a role in protein ubiquitination, sorting and degradation through its association with VCP. Involved in ubiquitin-mediated membrane proteins trafficking to late endosomes in an ESCRT-dependent manner, and hence plays a role in synaptic vesicle recycling. May play a role in macroautophagy, regulating for instance the clearance of damaged lysosomes. Plays a role in cerebellar Purkinje cell development. Positively regulates cytosolic and calcium-independent phospholipase A2 activities in a tumor necrosis factor alpha (TNF-alpha)- or lipopolysaccharide (LPS)-dependent manner, and hence prostaglandin E2 biosynthesis.</text>
</comment>
<comment type="subcellular location">
    <subcellularLocation>
        <location evidence="1">Nucleus</location>
    </subcellularLocation>
    <subcellularLocation>
        <location evidence="1">Cytoplasm</location>
    </subcellularLocation>
    <subcellularLocation>
        <location evidence="1">Synapse</location>
    </subcellularLocation>
    <text evidence="2">Recruited to damaged lysosomes decorated with K48-linked ubiquitin chains.</text>
</comment>
<comment type="domain">
    <text evidence="2">The PUL domain is composed of 6 armadillo-like repeats and mediates the interaction with VCP C-terminus.</text>
</comment>
<comment type="domain">
    <text evidence="2">The PFU domain mediates interaction with ubiquitin.</text>
</comment>
<comment type="similarity">
    <text evidence="5">Belongs to the WD repeat PLAP family.</text>
</comment>
<comment type="sequence caution" evidence="5">
    <conflict type="erroneous initiation">
        <sequence resource="EMBL-CDS" id="AAH74216"/>
    </conflict>
</comment>
<comment type="sequence caution" evidence="5">
    <conflict type="erroneous initiation">
        <sequence resource="EMBL-CDS" id="AAH98975"/>
    </conflict>
</comment>
<comment type="sequence caution" evidence="5">
    <conflict type="erroneous initiation">
        <sequence resource="EMBL-CDS" id="AAI08855"/>
    </conflict>
</comment>
<name>PLAP_XENLA</name>
<feature type="chain" id="PRO_0000239987" description="Phospholipase A-2-activating protein">
    <location>
        <begin position="1"/>
        <end position="799"/>
    </location>
</feature>
<feature type="repeat" description="WD 1">
    <location>
        <begin position="21"/>
        <end position="62"/>
    </location>
</feature>
<feature type="repeat" description="WD 2">
    <location>
        <begin position="69"/>
        <end position="113"/>
    </location>
</feature>
<feature type="repeat" description="WD 3">
    <location>
        <begin position="116"/>
        <end position="154"/>
    </location>
</feature>
<feature type="repeat" description="WD 4">
    <location>
        <begin position="155"/>
        <end position="194"/>
    </location>
</feature>
<feature type="repeat" description="WD 5">
    <location>
        <begin position="196"/>
        <end position="233"/>
    </location>
</feature>
<feature type="repeat" description="WD 6">
    <location>
        <begin position="235"/>
        <end position="274"/>
    </location>
</feature>
<feature type="repeat" description="WD 7">
    <location>
        <begin position="276"/>
        <end position="314"/>
    </location>
</feature>
<feature type="domain" description="PFU" evidence="3">
    <location>
        <begin position="372"/>
        <end position="471"/>
    </location>
</feature>
<feature type="domain" description="PUL" evidence="4">
    <location>
        <begin position="537"/>
        <end position="798"/>
    </location>
</feature>
<feature type="repeat" description="ARM 1">
    <location>
        <begin position="550"/>
        <end position="592"/>
    </location>
</feature>
<feature type="repeat" description="ARM 2">
    <location>
        <begin position="593"/>
        <end position="624"/>
    </location>
</feature>
<feature type="repeat" description="ARM 3">
    <location>
        <begin position="625"/>
        <end position="673"/>
    </location>
</feature>
<feature type="repeat" description="ARM 4">
    <location>
        <begin position="674"/>
        <end position="719"/>
    </location>
</feature>
<feature type="repeat" description="ARM 5">
    <location>
        <begin position="720"/>
        <end position="759"/>
    </location>
</feature>
<feature type="repeat" description="ARM 6">
    <location>
        <begin position="760"/>
        <end position="799"/>
    </location>
</feature>
<feature type="sequence conflict" description="In Ref. 1; AAI08855." evidence="5" ref="1">
    <location>
        <begin position="517"/>
        <end position="518"/>
    </location>
</feature>
<feature type="sequence conflict" description="In Ref. 1; AAI08855." evidence="5" ref="1">
    <original>E</original>
    <variation>K</variation>
    <location>
        <position position="569"/>
    </location>
</feature>
<accession>Q6GM65</accession>
<accession>Q32N40</accession>
<accession>Q4KLW0</accession>
<sequence>MSQAGRDGGDSCYRLRCSLLGHELDVRGVARCPLWPGEGFVSVSRDRSSRLWVPDSPNRGFIELQRMSGHSNFVSCVCILPPSDLYPRGLIATGGNDQNICVFSLDSEKPLYTLKGHKNTVCSLSSGKFGTLLSGSWDTTGKVWLNDKCMMTLQGHTAAVWAVKILPEQGLMLTGSADKSIKLWKAGRCEMTFLGHEDCVRGLATINDTEFLSCSNDASVRRWLITGECLQIYYGHTNYIYSVCLFPNSQDFVTTSEDRSIRIWRKGECTQTIRLPAQSVWCCCVLDNGDIVVGASDGIIRVFTESPDRIASIEEIQAFENELSKATIDPKTGDLGDIKIDDLPGRDHLNEPGTRDGQTRLIKEDGKVEAYQWSTGEGRWMKIGDVVGSSGATQQTSGRVLFEGKEYDYVFTIDVNESGPSHKLPYNLTEDPWLVAYNFLQKNDLNPMFLDQVAKFIIDNTAGQTPSTNLGYTDPLTGGGRYIPGSSSTDNNGADPFTGGNRYVPGSSLQSDYSAAAADPFTGKNAYRSSTAPTPNAYFPKTKPVTFDQANPSQILGKLKELNESAPEERKLPEEDLMQLDKLLSVAVNPSGGTVTAQQLDTLWRVVNWPEDLIFPALDVLRISIKNPTVNEMFCNEKEGSQFSSYLLQLMSPSGKQANQLLALRTFCNSFFCDPGSCLLMVERDNVLSKVIELKTVNNKNIHIALATLMLNYAICLHKVSDIEGKAQCLSAISSVIEVVQDLEAIFRLLVALGTLISGDTNAMQLAKSLGVDSQIKKYMSVTEPAKVNECCRLLLNML</sequence>
<reference key="1">
    <citation type="submission" date="2004-06" db="EMBL/GenBank/DDBJ databases">
        <authorList>
            <consortium name="NIH - Xenopus Gene Collection (XGC) project"/>
        </authorList>
    </citation>
    <scope>NUCLEOTIDE SEQUENCE [LARGE SCALE MRNA]</scope>
    <source>
        <tissue>Embryo</tissue>
        <tissue>Kidney</tissue>
        <tissue>Ovary</tissue>
    </source>
</reference>